<gene>
    <name evidence="2" type="primary">IMPDH</name>
    <name type="ordered locus">At1g79470</name>
    <name type="ORF">T8K14.11</name>
</gene>
<keyword id="KW-0007">Acetylation</keyword>
<keyword id="KW-0129">CBS domain</keyword>
<keyword id="KW-0963">Cytoplasm</keyword>
<keyword id="KW-0332">GMP biosynthesis</keyword>
<keyword id="KW-0479">Metal-binding</keyword>
<keyword id="KW-0520">NAD</keyword>
<keyword id="KW-0560">Oxidoreductase</keyword>
<keyword id="KW-0630">Potassium</keyword>
<keyword id="KW-0658">Purine biosynthesis</keyword>
<keyword id="KW-1185">Reference proteome</keyword>
<name>IMDH1_ARATH</name>
<comment type="function">
    <text evidence="2">Catalyzes the conversion of inosine 5'-phosphate (IMP) to xanthosine 5'-phosphate (XMP), the first committed and rate-limiting step in the de novo synthesis of guanine nucleotides, and therefore plays an important role in the regulation of cell growth.</text>
</comment>
<comment type="catalytic activity">
    <reaction evidence="2">
        <text>IMP + NAD(+) + H2O = XMP + NADH + H(+)</text>
        <dbReference type="Rhea" id="RHEA:11708"/>
        <dbReference type="ChEBI" id="CHEBI:15377"/>
        <dbReference type="ChEBI" id="CHEBI:15378"/>
        <dbReference type="ChEBI" id="CHEBI:57464"/>
        <dbReference type="ChEBI" id="CHEBI:57540"/>
        <dbReference type="ChEBI" id="CHEBI:57945"/>
        <dbReference type="ChEBI" id="CHEBI:58053"/>
        <dbReference type="EC" id="1.1.1.205"/>
    </reaction>
</comment>
<comment type="cofactor">
    <cofactor evidence="2">
        <name>K(+)</name>
        <dbReference type="ChEBI" id="CHEBI:29103"/>
    </cofactor>
</comment>
<comment type="activity regulation">
    <text evidence="2">Mycophenolic acid (MPA) is a non-competitive inhibitor that prevents formation of the closed enzyme conformation by binding to the same site as the amobile flap. In contrast, mizoribine monophosphate (MZP) is a competitive inhibitor that induces the closed conformation. MPA is a potent inhibitor of mammalian IMPDHs but a poor inhibitor of the bacterial enzymes. MZP is a more potent inhibitor of bacterial IMPDH.</text>
</comment>
<comment type="pathway">
    <text evidence="2">Purine metabolism; XMP biosynthesis via de novo pathway; XMP from IMP: step 1/1.</text>
</comment>
<comment type="subunit">
    <text evidence="2">Homotetramer.</text>
</comment>
<comment type="subcellular location">
    <subcellularLocation>
        <location evidence="2">Cytoplasm</location>
    </subcellularLocation>
</comment>
<comment type="similarity">
    <text evidence="2">Belongs to the IMPDH/GMPR family.</text>
</comment>
<proteinExistence type="evidence at transcript level"/>
<evidence type="ECO:0000250" key="1">
    <source>
        <dbReference type="UniProtKB" id="Q9SA34"/>
    </source>
</evidence>
<evidence type="ECO:0000255" key="2">
    <source>
        <dbReference type="HAMAP-Rule" id="MF_03156"/>
    </source>
</evidence>
<organism>
    <name type="scientific">Arabidopsis thaliana</name>
    <name type="common">Mouse-ear cress</name>
    <dbReference type="NCBI Taxonomy" id="3702"/>
    <lineage>
        <taxon>Eukaryota</taxon>
        <taxon>Viridiplantae</taxon>
        <taxon>Streptophyta</taxon>
        <taxon>Embryophyta</taxon>
        <taxon>Tracheophyta</taxon>
        <taxon>Spermatophyta</taxon>
        <taxon>Magnoliopsida</taxon>
        <taxon>eudicotyledons</taxon>
        <taxon>Gunneridae</taxon>
        <taxon>Pentapetalae</taxon>
        <taxon>rosids</taxon>
        <taxon>malvids</taxon>
        <taxon>Brassicales</taxon>
        <taxon>Brassicaceae</taxon>
        <taxon>Camelineae</taxon>
        <taxon>Arabidopsis</taxon>
    </lineage>
</organism>
<reference key="1">
    <citation type="journal article" date="1996" name="Gene">
        <title>Cloning and characterization of the gene encoding IMP dehydrogenase from Arabidopsis thaliana.</title>
        <authorList>
            <person name="Collart F.R."/>
            <person name="Osipiuk J."/>
            <person name="Trent J."/>
            <person name="Olsen G.J."/>
            <person name="Huberman E."/>
        </authorList>
    </citation>
    <scope>NUCLEOTIDE SEQUENCE [GENOMIC DNA]</scope>
    <source>
        <strain>cv. Columbia</strain>
    </source>
</reference>
<reference key="2">
    <citation type="journal article" date="2000" name="Nature">
        <title>Sequence and analysis of chromosome 1 of the plant Arabidopsis thaliana.</title>
        <authorList>
            <person name="Theologis A."/>
            <person name="Ecker J.R."/>
            <person name="Palm C.J."/>
            <person name="Federspiel N.A."/>
            <person name="Kaul S."/>
            <person name="White O."/>
            <person name="Alonso J."/>
            <person name="Altafi H."/>
            <person name="Araujo R."/>
            <person name="Bowman C.L."/>
            <person name="Brooks S.Y."/>
            <person name="Buehler E."/>
            <person name="Chan A."/>
            <person name="Chao Q."/>
            <person name="Chen H."/>
            <person name="Cheuk R.F."/>
            <person name="Chin C.W."/>
            <person name="Chung M.K."/>
            <person name="Conn L."/>
            <person name="Conway A.B."/>
            <person name="Conway A.R."/>
            <person name="Creasy T.H."/>
            <person name="Dewar K."/>
            <person name="Dunn P."/>
            <person name="Etgu P."/>
            <person name="Feldblyum T.V."/>
            <person name="Feng J.-D."/>
            <person name="Fong B."/>
            <person name="Fujii C.Y."/>
            <person name="Gill J.E."/>
            <person name="Goldsmith A.D."/>
            <person name="Haas B."/>
            <person name="Hansen N.F."/>
            <person name="Hughes B."/>
            <person name="Huizar L."/>
            <person name="Hunter J.L."/>
            <person name="Jenkins J."/>
            <person name="Johnson-Hopson C."/>
            <person name="Khan S."/>
            <person name="Khaykin E."/>
            <person name="Kim C.J."/>
            <person name="Koo H.L."/>
            <person name="Kremenetskaia I."/>
            <person name="Kurtz D.B."/>
            <person name="Kwan A."/>
            <person name="Lam B."/>
            <person name="Langin-Hooper S."/>
            <person name="Lee A."/>
            <person name="Lee J.M."/>
            <person name="Lenz C.A."/>
            <person name="Li J.H."/>
            <person name="Li Y.-P."/>
            <person name="Lin X."/>
            <person name="Liu S.X."/>
            <person name="Liu Z.A."/>
            <person name="Luros J.S."/>
            <person name="Maiti R."/>
            <person name="Marziali A."/>
            <person name="Militscher J."/>
            <person name="Miranda M."/>
            <person name="Nguyen M."/>
            <person name="Nierman W.C."/>
            <person name="Osborne B.I."/>
            <person name="Pai G."/>
            <person name="Peterson J."/>
            <person name="Pham P.K."/>
            <person name="Rizzo M."/>
            <person name="Rooney T."/>
            <person name="Rowley D."/>
            <person name="Sakano H."/>
            <person name="Salzberg S.L."/>
            <person name="Schwartz J.R."/>
            <person name="Shinn P."/>
            <person name="Southwick A.M."/>
            <person name="Sun H."/>
            <person name="Tallon L.J."/>
            <person name="Tambunga G."/>
            <person name="Toriumi M.J."/>
            <person name="Town C.D."/>
            <person name="Utterback T."/>
            <person name="Van Aken S."/>
            <person name="Vaysberg M."/>
            <person name="Vysotskaia V.S."/>
            <person name="Walker M."/>
            <person name="Wu D."/>
            <person name="Yu G."/>
            <person name="Fraser C.M."/>
            <person name="Venter J.C."/>
            <person name="Davis R.W."/>
        </authorList>
    </citation>
    <scope>NUCLEOTIDE SEQUENCE [LARGE SCALE GENOMIC DNA]</scope>
    <source>
        <strain>cv. Columbia</strain>
    </source>
</reference>
<reference key="3">
    <citation type="journal article" date="2017" name="Plant J.">
        <title>Araport11: a complete reannotation of the Arabidopsis thaliana reference genome.</title>
        <authorList>
            <person name="Cheng C.Y."/>
            <person name="Krishnakumar V."/>
            <person name="Chan A.P."/>
            <person name="Thibaud-Nissen F."/>
            <person name="Schobel S."/>
            <person name="Town C.D."/>
        </authorList>
    </citation>
    <scope>GENOME REANNOTATION</scope>
    <source>
        <strain>cv. Columbia</strain>
    </source>
</reference>
<reference key="4">
    <citation type="journal article" date="2003" name="Science">
        <title>Empirical analysis of transcriptional activity in the Arabidopsis genome.</title>
        <authorList>
            <person name="Yamada K."/>
            <person name="Lim J."/>
            <person name="Dale J.M."/>
            <person name="Chen H."/>
            <person name="Shinn P."/>
            <person name="Palm C.J."/>
            <person name="Southwick A.M."/>
            <person name="Wu H.C."/>
            <person name="Kim C.J."/>
            <person name="Nguyen M."/>
            <person name="Pham P.K."/>
            <person name="Cheuk R.F."/>
            <person name="Karlin-Newmann G."/>
            <person name="Liu S.X."/>
            <person name="Lam B."/>
            <person name="Sakano H."/>
            <person name="Wu T."/>
            <person name="Yu G."/>
            <person name="Miranda M."/>
            <person name="Quach H.L."/>
            <person name="Tripp M."/>
            <person name="Chang C.H."/>
            <person name="Lee J.M."/>
            <person name="Toriumi M.J."/>
            <person name="Chan M.M."/>
            <person name="Tang C.C."/>
            <person name="Onodera C.S."/>
            <person name="Deng J.M."/>
            <person name="Akiyama K."/>
            <person name="Ansari Y."/>
            <person name="Arakawa T."/>
            <person name="Banh J."/>
            <person name="Banno F."/>
            <person name="Bowser L."/>
            <person name="Brooks S.Y."/>
            <person name="Carninci P."/>
            <person name="Chao Q."/>
            <person name="Choy N."/>
            <person name="Enju A."/>
            <person name="Goldsmith A.D."/>
            <person name="Gurjal M."/>
            <person name="Hansen N.F."/>
            <person name="Hayashizaki Y."/>
            <person name="Johnson-Hopson C."/>
            <person name="Hsuan V.W."/>
            <person name="Iida K."/>
            <person name="Karnes M."/>
            <person name="Khan S."/>
            <person name="Koesema E."/>
            <person name="Ishida J."/>
            <person name="Jiang P.X."/>
            <person name="Jones T."/>
            <person name="Kawai J."/>
            <person name="Kamiya A."/>
            <person name="Meyers C."/>
            <person name="Nakajima M."/>
            <person name="Narusaka M."/>
            <person name="Seki M."/>
            <person name="Sakurai T."/>
            <person name="Satou M."/>
            <person name="Tamse R."/>
            <person name="Vaysberg M."/>
            <person name="Wallender E.K."/>
            <person name="Wong C."/>
            <person name="Yamamura Y."/>
            <person name="Yuan S."/>
            <person name="Shinozaki K."/>
            <person name="Davis R.W."/>
            <person name="Theologis A."/>
            <person name="Ecker J.R."/>
        </authorList>
    </citation>
    <scope>NUCLEOTIDE SEQUENCE [LARGE SCALE MRNA]</scope>
    <source>
        <strain>cv. Columbia</strain>
    </source>
</reference>
<sequence>MSTLEDGFPADKLFAQGYSYTYDDVIFLPHFIDFSTDAVSLSTRLSRRVPLSIPCVSSPMDTVSESHMAAAMASLGGIGIVHYNCGIAAQASIIRQAKSLKHPIASDAGVKFPEYEITSLDAFGPSSFVFVEQTGTMTTPKLLGYVTKSQWKRMNYEQREMKIYDYMKSCDSSDYCVPWEIDFEKLEFVLEDKQKGFVVLERDGETVNVVTKDDIQRVKGYPKSGPGTVGPDGEWMVGAAIGTRESDKERLEHLVNVGVNAVVLDSSQGNSIYQLEMIKYVKKTYPELDVIGGNVVTMYQAQNLIQAGVDGLRVGMGSGSICTTQEVCAVGRGQATAVYKVCSIAAQSGIPVIADGGISNSGHIVKALVLGASTVMMGSFLAGSTEAPGGYEYTNGKRIKKYRGMGSLEAMTKGSDQRYLGDQTKLKIAQGVVGAVADKGSVLKLIPYTMHAVKQGFQDLGASSLQSAHGLLRSNILRLEARTGAAQVEGGVHGLVSYEKKSF</sequence>
<dbReference type="EC" id="1.1.1.205" evidence="2"/>
<dbReference type="EMBL" id="L34684">
    <property type="protein sequence ID" value="AAB41940.1"/>
    <property type="molecule type" value="Genomic_DNA"/>
</dbReference>
<dbReference type="EMBL" id="AC007202">
    <property type="protein sequence ID" value="AAD30229.1"/>
    <property type="molecule type" value="Genomic_DNA"/>
</dbReference>
<dbReference type="EMBL" id="CP002684">
    <property type="protein sequence ID" value="AEE36247.1"/>
    <property type="molecule type" value="Genomic_DNA"/>
</dbReference>
<dbReference type="EMBL" id="AF462859">
    <property type="protein sequence ID" value="AAL58945.1"/>
    <property type="molecule type" value="mRNA"/>
</dbReference>
<dbReference type="EMBL" id="BT000820">
    <property type="protein sequence ID" value="AAN33195.1"/>
    <property type="molecule type" value="mRNA"/>
</dbReference>
<dbReference type="PIR" id="JC4999">
    <property type="entry name" value="JC4999"/>
</dbReference>
<dbReference type="RefSeq" id="NP_178065.1">
    <property type="nucleotide sequence ID" value="NM_106595.4"/>
</dbReference>
<dbReference type="SMR" id="P47996"/>
<dbReference type="BioGRID" id="29504">
    <property type="interactions" value="2"/>
</dbReference>
<dbReference type="FunCoup" id="P47996">
    <property type="interactions" value="2167"/>
</dbReference>
<dbReference type="IntAct" id="P47996">
    <property type="interactions" value="2"/>
</dbReference>
<dbReference type="STRING" id="3702.P47996"/>
<dbReference type="iPTMnet" id="P47996"/>
<dbReference type="PaxDb" id="3702-AT1G79470.1"/>
<dbReference type="ProteomicsDB" id="248534"/>
<dbReference type="EnsemblPlants" id="AT1G79470.1">
    <property type="protein sequence ID" value="AT1G79470.1"/>
    <property type="gene ID" value="AT1G79470"/>
</dbReference>
<dbReference type="GeneID" id="844285"/>
<dbReference type="Gramene" id="AT1G79470.1">
    <property type="protein sequence ID" value="AT1G79470.1"/>
    <property type="gene ID" value="AT1G79470"/>
</dbReference>
<dbReference type="KEGG" id="ath:AT1G79470"/>
<dbReference type="Araport" id="AT1G79470"/>
<dbReference type="TAIR" id="AT1G79470"/>
<dbReference type="eggNOG" id="KOG2550">
    <property type="taxonomic scope" value="Eukaryota"/>
</dbReference>
<dbReference type="HOGENOM" id="CLU_022552_2_1_1"/>
<dbReference type="InParanoid" id="P47996"/>
<dbReference type="OMA" id="NCPPDEQ"/>
<dbReference type="PhylomeDB" id="P47996"/>
<dbReference type="BioCyc" id="ARA:AT1G79470-MONOMER"/>
<dbReference type="UniPathway" id="UPA00601">
    <property type="reaction ID" value="UER00295"/>
</dbReference>
<dbReference type="CD-CODE" id="4299E36E">
    <property type="entry name" value="Nucleolus"/>
</dbReference>
<dbReference type="PRO" id="PR:P47996"/>
<dbReference type="Proteomes" id="UP000006548">
    <property type="component" value="Chromosome 1"/>
</dbReference>
<dbReference type="ExpressionAtlas" id="P47996">
    <property type="expression patterns" value="baseline and differential"/>
</dbReference>
<dbReference type="GO" id="GO:0005739">
    <property type="term" value="C:mitochondrion"/>
    <property type="evidence" value="ECO:0007005"/>
    <property type="project" value="TAIR"/>
</dbReference>
<dbReference type="GO" id="GO:0003938">
    <property type="term" value="F:IMP dehydrogenase activity"/>
    <property type="evidence" value="ECO:0007669"/>
    <property type="project" value="UniProtKB-UniRule"/>
</dbReference>
<dbReference type="GO" id="GO:0046872">
    <property type="term" value="F:metal ion binding"/>
    <property type="evidence" value="ECO:0007669"/>
    <property type="project" value="UniProtKB-UniRule"/>
</dbReference>
<dbReference type="GO" id="GO:0000166">
    <property type="term" value="F:nucleotide binding"/>
    <property type="evidence" value="ECO:0007669"/>
    <property type="project" value="UniProtKB-UniRule"/>
</dbReference>
<dbReference type="GO" id="GO:0006177">
    <property type="term" value="P:GMP biosynthetic process"/>
    <property type="evidence" value="ECO:0007669"/>
    <property type="project" value="UniProtKB-UniRule"/>
</dbReference>
<dbReference type="CDD" id="cd00381">
    <property type="entry name" value="IMPDH"/>
    <property type="match status" value="1"/>
</dbReference>
<dbReference type="FunFam" id="3.20.20.70:FF:000086">
    <property type="entry name" value="IMP dehydrogenase, putative"/>
    <property type="match status" value="1"/>
</dbReference>
<dbReference type="Gene3D" id="3.20.20.70">
    <property type="entry name" value="Aldolase class I"/>
    <property type="match status" value="1"/>
</dbReference>
<dbReference type="HAMAP" id="MF_01964">
    <property type="entry name" value="IMPDH"/>
    <property type="match status" value="1"/>
</dbReference>
<dbReference type="InterPro" id="IPR013785">
    <property type="entry name" value="Aldolase_TIM"/>
</dbReference>
<dbReference type="InterPro" id="IPR046342">
    <property type="entry name" value="CBS_dom_sf"/>
</dbReference>
<dbReference type="InterPro" id="IPR005990">
    <property type="entry name" value="IMP_DH"/>
</dbReference>
<dbReference type="InterPro" id="IPR015875">
    <property type="entry name" value="IMP_DH/GMP_Rdtase_CS"/>
</dbReference>
<dbReference type="InterPro" id="IPR001093">
    <property type="entry name" value="IMP_DH_GMPRt"/>
</dbReference>
<dbReference type="NCBIfam" id="TIGR01302">
    <property type="entry name" value="IMP_dehydrog"/>
    <property type="match status" value="1"/>
</dbReference>
<dbReference type="PANTHER" id="PTHR11911:SF124">
    <property type="entry name" value="INOSINE-5'-MONOPHOSPHATE DEHYDROGENASE 1"/>
    <property type="match status" value="1"/>
</dbReference>
<dbReference type="PANTHER" id="PTHR11911">
    <property type="entry name" value="INOSINE-5-MONOPHOSPHATE DEHYDROGENASE RELATED"/>
    <property type="match status" value="1"/>
</dbReference>
<dbReference type="Pfam" id="PF00478">
    <property type="entry name" value="IMPDH"/>
    <property type="match status" value="1"/>
</dbReference>
<dbReference type="PIRSF" id="PIRSF000130">
    <property type="entry name" value="IMPDH"/>
    <property type="match status" value="1"/>
</dbReference>
<dbReference type="SMART" id="SM01240">
    <property type="entry name" value="IMPDH"/>
    <property type="match status" value="1"/>
</dbReference>
<dbReference type="SUPFAM" id="SSF54631">
    <property type="entry name" value="CBS-domain pair"/>
    <property type="match status" value="1"/>
</dbReference>
<dbReference type="SUPFAM" id="SSF51412">
    <property type="entry name" value="Inosine monophosphate dehydrogenase (IMPDH)"/>
    <property type="match status" value="1"/>
</dbReference>
<dbReference type="PROSITE" id="PS00487">
    <property type="entry name" value="IMP_DH_GMP_RED"/>
    <property type="match status" value="1"/>
</dbReference>
<feature type="initiator methionine" description="Removed" evidence="1">
    <location>
        <position position="1"/>
    </location>
</feature>
<feature type="chain" id="PRO_0000093686" description="Inosine-5'-monophosphate dehydrogenase 1">
    <location>
        <begin position="2"/>
        <end position="503"/>
    </location>
</feature>
<feature type="domain" description="CBS" evidence="2">
    <location>
        <begin position="167"/>
        <end position="225"/>
    </location>
</feature>
<feature type="active site" description="Thioimidate intermediate" evidence="2">
    <location>
        <position position="322"/>
    </location>
</feature>
<feature type="active site" description="Proton acceptor" evidence="2">
    <location>
        <position position="418"/>
    </location>
</feature>
<feature type="binding site" evidence="2">
    <location>
        <begin position="265"/>
        <end position="267"/>
    </location>
    <ligand>
        <name>NAD(+)</name>
        <dbReference type="ChEBI" id="CHEBI:57540"/>
    </ligand>
</feature>
<feature type="binding site" evidence="2">
    <location>
        <begin position="315"/>
        <end position="317"/>
    </location>
    <ligand>
        <name>NAD(+)</name>
        <dbReference type="ChEBI" id="CHEBI:57540"/>
    </ligand>
</feature>
<feature type="binding site" description="in other chain" evidence="2">
    <location>
        <position position="317"/>
    </location>
    <ligand>
        <name>K(+)</name>
        <dbReference type="ChEBI" id="CHEBI:29103"/>
        <note>ligand shared between two tetrameric partners</note>
    </ligand>
</feature>
<feature type="binding site" description="in other chain" evidence="2">
    <location>
        <position position="319"/>
    </location>
    <ligand>
        <name>K(+)</name>
        <dbReference type="ChEBI" id="CHEBI:29103"/>
        <note>ligand shared between two tetrameric partners</note>
    </ligand>
</feature>
<feature type="binding site" evidence="2">
    <location>
        <position position="320"/>
    </location>
    <ligand>
        <name>IMP</name>
        <dbReference type="ChEBI" id="CHEBI:58053"/>
    </ligand>
</feature>
<feature type="binding site" description="in other chain" evidence="2">
    <location>
        <position position="322"/>
    </location>
    <ligand>
        <name>K(+)</name>
        <dbReference type="ChEBI" id="CHEBI:29103"/>
        <note>ligand shared between two tetrameric partners</note>
    </ligand>
</feature>
<feature type="binding site" evidence="2">
    <location>
        <begin position="355"/>
        <end position="357"/>
    </location>
    <ligand>
        <name>IMP</name>
        <dbReference type="ChEBI" id="CHEBI:58053"/>
    </ligand>
</feature>
<feature type="binding site" evidence="2">
    <location>
        <begin position="378"/>
        <end position="379"/>
    </location>
    <ligand>
        <name>IMP</name>
        <dbReference type="ChEBI" id="CHEBI:58053"/>
    </ligand>
</feature>
<feature type="binding site" evidence="2">
    <location>
        <begin position="402"/>
        <end position="406"/>
    </location>
    <ligand>
        <name>IMP</name>
        <dbReference type="ChEBI" id="CHEBI:58053"/>
    </ligand>
</feature>
<feature type="binding site" evidence="2">
    <location>
        <position position="430"/>
    </location>
    <ligand>
        <name>IMP</name>
        <dbReference type="ChEBI" id="CHEBI:58053"/>
    </ligand>
</feature>
<feature type="binding site" evidence="2">
    <location>
        <position position="489"/>
    </location>
    <ligand>
        <name>K(+)</name>
        <dbReference type="ChEBI" id="CHEBI:29103"/>
        <note>ligand shared between two tetrameric partners</note>
    </ligand>
</feature>
<feature type="binding site" evidence="2">
    <location>
        <position position="490"/>
    </location>
    <ligand>
        <name>K(+)</name>
        <dbReference type="ChEBI" id="CHEBI:29103"/>
        <note>ligand shared between two tetrameric partners</note>
    </ligand>
</feature>
<feature type="binding site" evidence="2">
    <location>
        <position position="491"/>
    </location>
    <ligand>
        <name>K(+)</name>
        <dbReference type="ChEBI" id="CHEBI:29103"/>
        <note>ligand shared between two tetrameric partners</note>
    </ligand>
</feature>
<feature type="modified residue" description="N-acetylserine" evidence="1">
    <location>
        <position position="2"/>
    </location>
</feature>
<protein>
    <recommendedName>
        <fullName evidence="2">Inosine-5'-monophosphate dehydrogenase 1</fullName>
        <shortName evidence="2">IMP dehydrogenase 1</shortName>
        <shortName evidence="2">IMPD 1</shortName>
        <shortName evidence="2">IMPDH 1</shortName>
        <ecNumber evidence="2">1.1.1.205</ecNumber>
    </recommendedName>
</protein>
<accession>P47996</accession>